<proteinExistence type="inferred from homology"/>
<accession>A5EWV8</accession>
<evidence type="ECO:0000255" key="1">
    <source>
        <dbReference type="HAMAP-Rule" id="MF_00373"/>
    </source>
</evidence>
<evidence type="ECO:0000305" key="2"/>
<name>RL28_DICNV</name>
<dbReference type="EMBL" id="CP000513">
    <property type="protein sequence ID" value="ABQ14137.1"/>
    <property type="molecule type" value="Genomic_DNA"/>
</dbReference>
<dbReference type="RefSeq" id="WP_011927813.1">
    <property type="nucleotide sequence ID" value="NC_009446.1"/>
</dbReference>
<dbReference type="SMR" id="A5EWV8"/>
<dbReference type="STRING" id="246195.DNO_0060"/>
<dbReference type="KEGG" id="dno:DNO_0060"/>
<dbReference type="eggNOG" id="COG0227">
    <property type="taxonomic scope" value="Bacteria"/>
</dbReference>
<dbReference type="HOGENOM" id="CLU_064548_3_1_6"/>
<dbReference type="OrthoDB" id="9805609at2"/>
<dbReference type="Proteomes" id="UP000000248">
    <property type="component" value="Chromosome"/>
</dbReference>
<dbReference type="GO" id="GO:0022625">
    <property type="term" value="C:cytosolic large ribosomal subunit"/>
    <property type="evidence" value="ECO:0007669"/>
    <property type="project" value="TreeGrafter"/>
</dbReference>
<dbReference type="GO" id="GO:0003735">
    <property type="term" value="F:structural constituent of ribosome"/>
    <property type="evidence" value="ECO:0007669"/>
    <property type="project" value="InterPro"/>
</dbReference>
<dbReference type="GO" id="GO:0006412">
    <property type="term" value="P:translation"/>
    <property type="evidence" value="ECO:0007669"/>
    <property type="project" value="UniProtKB-UniRule"/>
</dbReference>
<dbReference type="FunFam" id="2.30.170.40:FF:000001">
    <property type="entry name" value="50S ribosomal protein L28"/>
    <property type="match status" value="1"/>
</dbReference>
<dbReference type="Gene3D" id="2.30.170.40">
    <property type="entry name" value="Ribosomal protein L28/L24"/>
    <property type="match status" value="1"/>
</dbReference>
<dbReference type="HAMAP" id="MF_00373">
    <property type="entry name" value="Ribosomal_bL28"/>
    <property type="match status" value="1"/>
</dbReference>
<dbReference type="InterPro" id="IPR026569">
    <property type="entry name" value="Ribosomal_bL28"/>
</dbReference>
<dbReference type="InterPro" id="IPR034704">
    <property type="entry name" value="Ribosomal_bL28/bL31-like_sf"/>
</dbReference>
<dbReference type="InterPro" id="IPR001383">
    <property type="entry name" value="Ribosomal_bL28_bact-type"/>
</dbReference>
<dbReference type="InterPro" id="IPR037147">
    <property type="entry name" value="Ribosomal_bL28_sf"/>
</dbReference>
<dbReference type="NCBIfam" id="TIGR00009">
    <property type="entry name" value="L28"/>
    <property type="match status" value="1"/>
</dbReference>
<dbReference type="PANTHER" id="PTHR13528">
    <property type="entry name" value="39S RIBOSOMAL PROTEIN L28, MITOCHONDRIAL"/>
    <property type="match status" value="1"/>
</dbReference>
<dbReference type="PANTHER" id="PTHR13528:SF2">
    <property type="entry name" value="LARGE RIBOSOMAL SUBUNIT PROTEIN BL28M"/>
    <property type="match status" value="1"/>
</dbReference>
<dbReference type="Pfam" id="PF00830">
    <property type="entry name" value="Ribosomal_L28"/>
    <property type="match status" value="1"/>
</dbReference>
<dbReference type="SUPFAM" id="SSF143800">
    <property type="entry name" value="L28p-like"/>
    <property type="match status" value="1"/>
</dbReference>
<gene>
    <name evidence="1" type="primary">rpmB</name>
    <name type="ordered locus">DNO_0060</name>
</gene>
<comment type="similarity">
    <text evidence="1">Belongs to the bacterial ribosomal protein bL28 family.</text>
</comment>
<reference key="1">
    <citation type="journal article" date="2007" name="Nat. Biotechnol.">
        <title>Genome sequence and identification of candidate vaccine antigens from the animal pathogen Dichelobacter nodosus.</title>
        <authorList>
            <person name="Myers G.S.A."/>
            <person name="Parker D."/>
            <person name="Al-Hasani K."/>
            <person name="Kennan R.M."/>
            <person name="Seemann T."/>
            <person name="Ren Q."/>
            <person name="Badger J.H."/>
            <person name="Selengut J.D."/>
            <person name="Deboy R.T."/>
            <person name="Tettelin H."/>
            <person name="Boyce J.D."/>
            <person name="McCarl V.P."/>
            <person name="Han X."/>
            <person name="Nelson W.C."/>
            <person name="Madupu R."/>
            <person name="Mohamoud Y."/>
            <person name="Holley T."/>
            <person name="Fedorova N."/>
            <person name="Khouri H."/>
            <person name="Bottomley S.P."/>
            <person name="Whittington R.J."/>
            <person name="Adler B."/>
            <person name="Songer J.G."/>
            <person name="Rood J.I."/>
            <person name="Paulsen I.T."/>
        </authorList>
    </citation>
    <scope>NUCLEOTIDE SEQUENCE [LARGE SCALE GENOMIC DNA]</scope>
    <source>
        <strain>VCS1703A</strain>
    </source>
</reference>
<keyword id="KW-1185">Reference proteome</keyword>
<keyword id="KW-0687">Ribonucleoprotein</keyword>
<keyword id="KW-0689">Ribosomal protein</keyword>
<feature type="chain" id="PRO_1000007227" description="Large ribosomal subunit protein bL28">
    <location>
        <begin position="1"/>
        <end position="78"/>
    </location>
</feature>
<sequence>MSRICQVTGKKPMVGNTVSHANNKGKRRFLPNIQEHRFWVQSENRFITLKVSAHGMRIIDKKGIDAVLAQMRARGEKI</sequence>
<protein>
    <recommendedName>
        <fullName evidence="1">Large ribosomal subunit protein bL28</fullName>
    </recommendedName>
    <alternativeName>
        <fullName evidence="2">50S ribosomal protein L28</fullName>
    </alternativeName>
</protein>
<organism>
    <name type="scientific">Dichelobacter nodosus (strain VCS1703A)</name>
    <dbReference type="NCBI Taxonomy" id="246195"/>
    <lineage>
        <taxon>Bacteria</taxon>
        <taxon>Pseudomonadati</taxon>
        <taxon>Pseudomonadota</taxon>
        <taxon>Gammaproteobacteria</taxon>
        <taxon>Cardiobacteriales</taxon>
        <taxon>Cardiobacteriaceae</taxon>
        <taxon>Dichelobacter</taxon>
    </lineage>
</organism>